<gene>
    <name type="primary">OPG105</name>
    <name type="synonym">RPO147</name>
    <name type="ordered locus">MVA090R</name>
    <name type="ordered locus">ACAM3000_MVA_090</name>
</gene>
<accession>O57204</accession>
<keyword id="KW-0002">3D-structure</keyword>
<keyword id="KW-0240">DNA-directed RNA polymerase</keyword>
<keyword id="KW-0548">Nucleotidyltransferase</keyword>
<keyword id="KW-0804">Transcription</keyword>
<keyword id="KW-0808">Transferase</keyword>
<keyword id="KW-0946">Virion</keyword>
<evidence type="ECO:0000269" key="1">
    <source>
    </source>
</evidence>
<evidence type="ECO:0000305" key="2"/>
<evidence type="ECO:0007744" key="3">
    <source>
        <dbReference type="PDB" id="6RIE"/>
    </source>
</evidence>
<evidence type="ECO:0007829" key="4">
    <source>
        <dbReference type="PDB" id="6RIE"/>
    </source>
</evidence>
<sequence length="1286" mass="146886">MAVISKVTYSLYDQKEINATDIIISHVKNDDDIGTVKDGRLGAMDGALCKTCGKTELECFGHWGKVSIYKTHIVKPEFISEIIRLLNYICIHCGLLRSREPYSDDINLKELSGHALRRLKDKILSKKKSCWNSECMQPYQKITFSKKKVCFVNKLDDINVPNSLIYQKLISIHEKFWPLLEIHQYPANLFYTDYFPIPPLIIRPAISFWIDSIPKETNELTYLLGMIVKNCNLNADEQVIQKAVIEYDDIKIISNNTSSINLSYITSGKNNMIRSYIVARRKDQTARSVIGPSTSITVNEVGMPAYIRNTLTEKIFVNAFTVDKVKQLLASNQVKFYFNKRLNQLTRIRQGKFIKNKIHLLPGDWVEVAVQEYTSIIFGRQPSLHRYNVIASSIRATEGDTIKISPGIVNSQNADFDGDEEWMILEQNPKAVIEQSILMYPTTLLKHDIHGAPVYGSIQDEIVAAYSLFRIQDLCLDEVLNILGKYGREFDPKGKCKFSGKDIYTYLIGEKINYPGLLKDGEIIANDVDSNFVVAMRHLSLAGLLSDHKSNVEGINFIIKSSYVFKRYLSIYGFGVTFKDLRPNSTFTNKLEAINVEKIELIKEAYAKYLNDVRDGKIVPLSKALEADYVESMLSNLTNLNIREIEEHMRQTLIDDPDNNLLKMAKAGYKVNPTELMYILGTYGQQRIDGEPAETRVLGRVLPYYLPDSKDPEGRGYILNSLTKGLTGSQYYFSMLVARSQSTDIVCETSRTGTLARKIIKKMEDMVVDGYGQVVIGNTLIKYAANYTKILGSVCKPVDLIYPDESMTWYLEISALWNKIKQGFVYSQKQKLAKKTLAPFNFLVFVKPTTEDNAIKVKDLYDMIHNVIDDVREKYFFTVSNIDFMEYIFLTHLNPSRIRITKETAITIFEKFYEKLNYTLGGGTPIGIISAQVLSEKFTQQALSSFHTTEKSGAVKQKLGFNEFNNLTNLSKNKTEIITLVSDDISKLQSVKINFEFVCLGELNPNITLRKETDRYVVDIIVNRLYIKRAEITELVVEYMIERFISFSVIVKEWGMETFIEDEDNIRFTVYLNFVEPEELNLSKFMMVLPGAANKGKISKFKIPISDYTGYDDFNQTKKLNKMTVELMNLKELGSFDLENVNVYPGVWNTYDIFGIEAAREYLCEAMLNTYGEGFDYLYQPCDLLASLLCASYEPESVNKFKFGAASTLKRATFGDNKALLNAALHKKSEPINDNSSCHFFSKVPNIGTGYYKYFIDLGLLMRMERKLSDKISSQKIKEMEETEDF</sequence>
<organism>
    <name type="scientific">Vaccinia virus (strain Ankara)</name>
    <name type="common">VACV</name>
    <dbReference type="NCBI Taxonomy" id="126794"/>
    <lineage>
        <taxon>Viruses</taxon>
        <taxon>Varidnaviria</taxon>
        <taxon>Bamfordvirae</taxon>
        <taxon>Nucleocytoviricota</taxon>
        <taxon>Pokkesviricetes</taxon>
        <taxon>Chitovirales</taxon>
        <taxon>Poxviridae</taxon>
        <taxon>Chordopoxvirinae</taxon>
        <taxon>Orthopoxvirus</taxon>
        <taxon>Vaccinia virus</taxon>
    </lineage>
</organism>
<feature type="chain" id="PRO_0000073918" description="DNA-directed RNA polymerase 147 kDa polypeptide">
    <location>
        <begin position="1"/>
        <end position="1286"/>
    </location>
</feature>
<feature type="strand" evidence="4">
    <location>
        <begin position="3"/>
        <end position="11"/>
    </location>
</feature>
<feature type="helix" evidence="4">
    <location>
        <begin position="14"/>
        <end position="17"/>
    </location>
</feature>
<feature type="strand" evidence="4">
    <location>
        <begin position="30"/>
        <end position="32"/>
    </location>
</feature>
<feature type="strand" evidence="4">
    <location>
        <begin position="34"/>
        <end position="37"/>
    </location>
</feature>
<feature type="strand" evidence="4">
    <location>
        <begin position="50"/>
        <end position="52"/>
    </location>
</feature>
<feature type="turn" evidence="4">
    <location>
        <begin position="56"/>
        <end position="58"/>
    </location>
</feature>
<feature type="strand" evidence="4">
    <location>
        <begin position="64"/>
        <end position="66"/>
    </location>
</feature>
<feature type="strand" evidence="4">
    <location>
        <begin position="72"/>
        <end position="74"/>
    </location>
</feature>
<feature type="helix" evidence="4">
    <location>
        <begin position="76"/>
        <end position="78"/>
    </location>
</feature>
<feature type="helix" evidence="4">
    <location>
        <begin position="79"/>
        <end position="85"/>
    </location>
</feature>
<feature type="strand" evidence="4">
    <location>
        <begin position="86"/>
        <end position="89"/>
    </location>
</feature>
<feature type="strand" evidence="4">
    <location>
        <begin position="91"/>
        <end position="94"/>
    </location>
</feature>
<feature type="turn" evidence="4">
    <location>
        <begin position="100"/>
        <end position="102"/>
    </location>
</feature>
<feature type="turn" evidence="4">
    <location>
        <begin position="108"/>
        <end position="110"/>
    </location>
</feature>
<feature type="helix" evidence="4">
    <location>
        <begin position="114"/>
        <end position="117"/>
    </location>
</feature>
<feature type="helix" evidence="4">
    <location>
        <begin position="121"/>
        <end position="124"/>
    </location>
</feature>
<feature type="strand" evidence="4">
    <location>
        <begin position="132"/>
        <end position="134"/>
    </location>
</feature>
<feature type="strand" evidence="4">
    <location>
        <begin position="142"/>
        <end position="144"/>
    </location>
</feature>
<feature type="strand" evidence="4">
    <location>
        <begin position="146"/>
        <end position="153"/>
    </location>
</feature>
<feature type="turn" evidence="4">
    <location>
        <begin position="154"/>
        <end position="156"/>
    </location>
</feature>
<feature type="helix" evidence="4">
    <location>
        <begin position="162"/>
        <end position="169"/>
    </location>
</feature>
<feature type="strand" evidence="4">
    <location>
        <begin position="174"/>
        <end position="176"/>
    </location>
</feature>
<feature type="turn" evidence="4">
    <location>
        <begin position="177"/>
        <end position="181"/>
    </location>
</feature>
<feature type="helix" evidence="4">
    <location>
        <begin position="186"/>
        <end position="189"/>
    </location>
</feature>
<feature type="strand" evidence="4">
    <location>
        <begin position="190"/>
        <end position="193"/>
    </location>
</feature>
<feature type="strand" evidence="4">
    <location>
        <begin position="195"/>
        <end position="197"/>
    </location>
</feature>
<feature type="strand" evidence="4">
    <location>
        <begin position="206"/>
        <end position="210"/>
    </location>
</feature>
<feature type="strand" evidence="4">
    <location>
        <begin position="213"/>
        <end position="217"/>
    </location>
</feature>
<feature type="helix" evidence="4">
    <location>
        <begin position="219"/>
        <end position="229"/>
    </location>
</feature>
<feature type="strand" evidence="4">
    <location>
        <begin position="232"/>
        <end position="234"/>
    </location>
</feature>
<feature type="turn" evidence="4">
    <location>
        <begin position="237"/>
        <end position="240"/>
    </location>
</feature>
<feature type="helix" evidence="4">
    <location>
        <begin position="241"/>
        <end position="248"/>
    </location>
</feature>
<feature type="helix" evidence="4">
    <location>
        <begin position="250"/>
        <end position="252"/>
    </location>
</feature>
<feature type="helix" evidence="4">
    <location>
        <begin position="262"/>
        <end position="265"/>
    </location>
</feature>
<feature type="helix" evidence="4">
    <location>
        <begin position="272"/>
        <end position="276"/>
    </location>
</feature>
<feature type="strand" evidence="4">
    <location>
        <begin position="278"/>
        <end position="292"/>
    </location>
</feature>
<feature type="strand" evidence="4">
    <location>
        <begin position="294"/>
        <end position="296"/>
    </location>
</feature>
<feature type="strand" evidence="4">
    <location>
        <begin position="300"/>
        <end position="303"/>
    </location>
</feature>
<feature type="helix" evidence="4">
    <location>
        <begin position="305"/>
        <end position="308"/>
    </location>
</feature>
<feature type="strand" evidence="4">
    <location>
        <begin position="312"/>
        <end position="316"/>
    </location>
</feature>
<feature type="strand" evidence="4">
    <location>
        <begin position="318"/>
        <end position="321"/>
    </location>
</feature>
<feature type="helix" evidence="4">
    <location>
        <begin position="322"/>
        <end position="329"/>
    </location>
</feature>
<feature type="turn" evidence="4">
    <location>
        <begin position="330"/>
        <end position="332"/>
    </location>
</feature>
<feature type="strand" evidence="4">
    <location>
        <begin position="334"/>
        <end position="339"/>
    </location>
</feature>
<feature type="turn" evidence="4">
    <location>
        <begin position="340"/>
        <end position="343"/>
    </location>
</feature>
<feature type="strand" evidence="4">
    <location>
        <begin position="344"/>
        <end position="347"/>
    </location>
</feature>
<feature type="strand" evidence="4">
    <location>
        <begin position="350"/>
        <end position="352"/>
    </location>
</feature>
<feature type="strand" evidence="4">
    <location>
        <begin position="365"/>
        <end position="369"/>
    </location>
</feature>
<feature type="strand" evidence="4">
    <location>
        <begin position="375"/>
        <end position="379"/>
    </location>
</feature>
<feature type="turn" evidence="4">
    <location>
        <begin position="386"/>
        <end position="388"/>
    </location>
</feature>
<feature type="strand" evidence="4">
    <location>
        <begin position="389"/>
        <end position="396"/>
    </location>
</feature>
<feature type="strand" evidence="4">
    <location>
        <begin position="398"/>
        <end position="404"/>
    </location>
</feature>
<feature type="helix" evidence="4">
    <location>
        <begin position="406"/>
        <end position="408"/>
    </location>
</feature>
<feature type="turn" evidence="4">
    <location>
        <begin position="409"/>
        <end position="413"/>
    </location>
</feature>
<feature type="turn" evidence="4">
    <location>
        <begin position="416"/>
        <end position="418"/>
    </location>
</feature>
<feature type="strand" evidence="4">
    <location>
        <begin position="420"/>
        <end position="424"/>
    </location>
</feature>
<feature type="helix" evidence="4">
    <location>
        <begin position="429"/>
        <end position="437"/>
    </location>
</feature>
<feature type="turn" evidence="4">
    <location>
        <begin position="441"/>
        <end position="444"/>
    </location>
</feature>
<feature type="turn" evidence="4">
    <location>
        <begin position="448"/>
        <end position="450"/>
    </location>
</feature>
<feature type="helix" evidence="4">
    <location>
        <begin position="459"/>
        <end position="470"/>
    </location>
</feature>
<feature type="strand" evidence="4">
    <location>
        <begin position="472"/>
        <end position="474"/>
    </location>
</feature>
<feature type="helix" evidence="4">
    <location>
        <begin position="476"/>
        <end position="483"/>
    </location>
</feature>
<feature type="helix" evidence="4">
    <location>
        <begin position="484"/>
        <end position="486"/>
    </location>
</feature>
<feature type="helix" evidence="4">
    <location>
        <begin position="500"/>
        <end position="508"/>
    </location>
</feature>
<feature type="turn" evidence="4">
    <location>
        <begin position="515"/>
        <end position="517"/>
    </location>
</feature>
<feature type="strand" evidence="4">
    <location>
        <begin position="525"/>
        <end position="527"/>
    </location>
</feature>
<feature type="helix" evidence="4">
    <location>
        <begin position="530"/>
        <end position="532"/>
    </location>
</feature>
<feature type="helix" evidence="4">
    <location>
        <begin position="541"/>
        <end position="548"/>
    </location>
</feature>
<feature type="helix" evidence="4">
    <location>
        <begin position="551"/>
        <end position="571"/>
    </location>
</feature>
<feature type="turn" evidence="4">
    <location>
        <begin position="579"/>
        <end position="581"/>
    </location>
</feature>
<feature type="strand" evidence="4">
    <location>
        <begin position="583"/>
        <end position="585"/>
    </location>
</feature>
<feature type="helix" evidence="4">
    <location>
        <begin position="586"/>
        <end position="614"/>
    </location>
</feature>
<feature type="helix" evidence="4">
    <location>
        <begin position="623"/>
        <end position="655"/>
    </location>
</feature>
<feature type="helix" evidence="4">
    <location>
        <begin position="660"/>
        <end position="667"/>
    </location>
</feature>
<feature type="helix" evidence="4">
    <location>
        <begin position="673"/>
        <end position="680"/>
    </location>
</feature>
<feature type="helix" evidence="4">
    <location>
        <begin position="697"/>
        <end position="699"/>
    </location>
</feature>
<feature type="strand" evidence="4">
    <location>
        <begin position="700"/>
        <end position="702"/>
    </location>
</feature>
<feature type="turn" evidence="4">
    <location>
        <begin position="713"/>
        <end position="716"/>
    </location>
</feature>
<feature type="turn" evidence="4">
    <location>
        <begin position="722"/>
        <end position="724"/>
    </location>
</feature>
<feature type="helix" evidence="4">
    <location>
        <begin position="728"/>
        <end position="763"/>
    </location>
</feature>
<feature type="strand" evidence="4">
    <location>
        <begin position="766"/>
        <end position="768"/>
    </location>
</feature>
<feature type="strand" evidence="4">
    <location>
        <begin position="774"/>
        <end position="776"/>
    </location>
</feature>
<feature type="strand" evidence="4">
    <location>
        <begin position="779"/>
        <end position="784"/>
    </location>
</feature>
<feature type="helix" evidence="4">
    <location>
        <begin position="785"/>
        <end position="787"/>
    </location>
</feature>
<feature type="turn" evidence="4">
    <location>
        <begin position="792"/>
        <end position="794"/>
    </location>
</feature>
<feature type="strand" evidence="4">
    <location>
        <begin position="796"/>
        <end position="799"/>
    </location>
</feature>
<feature type="helix" evidence="4">
    <location>
        <begin position="810"/>
        <end position="820"/>
    </location>
</feature>
<feature type="strand" evidence="4">
    <location>
        <begin position="824"/>
        <end position="826"/>
    </location>
</feature>
<feature type="turn" evidence="4">
    <location>
        <begin position="827"/>
        <end position="830"/>
    </location>
</feature>
<feature type="strand" evidence="4">
    <location>
        <begin position="835"/>
        <end position="840"/>
    </location>
</feature>
<feature type="helix" evidence="4">
    <location>
        <begin position="842"/>
        <end position="844"/>
    </location>
</feature>
<feature type="turn" evidence="4">
    <location>
        <begin position="851"/>
        <end position="853"/>
    </location>
</feature>
<feature type="helix" evidence="4">
    <location>
        <begin position="857"/>
        <end position="874"/>
    </location>
</feature>
<feature type="turn" evidence="4">
    <location>
        <begin position="875"/>
        <end position="878"/>
    </location>
</feature>
<feature type="helix" evidence="4">
    <location>
        <begin position="883"/>
        <end position="892"/>
    </location>
</feature>
<feature type="turn" evidence="4">
    <location>
        <begin position="895"/>
        <end position="897"/>
    </location>
</feature>
<feature type="helix" evidence="4">
    <location>
        <begin position="902"/>
        <end position="918"/>
    </location>
</feature>
<feature type="helix" evidence="4">
    <location>
        <begin position="926"/>
        <end position="943"/>
    </location>
</feature>
<feature type="helix" evidence="4">
    <location>
        <begin position="961"/>
        <end position="969"/>
    </location>
</feature>
<feature type="strand" evidence="4">
    <location>
        <begin position="976"/>
        <end position="985"/>
    </location>
</feature>
<feature type="helix" evidence="4">
    <location>
        <begin position="986"/>
        <end position="995"/>
    </location>
</feature>
<feature type="helix" evidence="4">
    <location>
        <begin position="1001"/>
        <end position="1003"/>
    </location>
</feature>
<feature type="strand" evidence="4">
    <location>
        <begin position="1006"/>
        <end position="1012"/>
    </location>
</feature>
<feature type="strand" evidence="4">
    <location>
        <begin position="1015"/>
        <end position="1023"/>
    </location>
</feature>
<feature type="helix" evidence="4">
    <location>
        <begin position="1024"/>
        <end position="1029"/>
    </location>
</feature>
<feature type="helix" evidence="4">
    <location>
        <begin position="1034"/>
        <end position="1046"/>
    </location>
</feature>
<feature type="strand" evidence="4">
    <location>
        <begin position="1048"/>
        <end position="1060"/>
    </location>
</feature>
<feature type="strand" evidence="4">
    <location>
        <begin position="1062"/>
        <end position="1076"/>
    </location>
</feature>
<feature type="helix" evidence="4">
    <location>
        <begin position="1078"/>
        <end position="1092"/>
    </location>
</feature>
<feature type="strand" evidence="4">
    <location>
        <begin position="1106"/>
        <end position="1115"/>
    </location>
</feature>
<feature type="strand" evidence="4">
    <location>
        <begin position="1117"/>
        <end position="1129"/>
    </location>
</feature>
<feature type="helix" evidence="4">
    <location>
        <begin position="1130"/>
        <end position="1135"/>
    </location>
</feature>
<feature type="strand" evidence="4">
    <location>
        <begin position="1142"/>
        <end position="1144"/>
    </location>
</feature>
<feature type="helix" evidence="4">
    <location>
        <begin position="1147"/>
        <end position="1153"/>
    </location>
</feature>
<feature type="helix" evidence="4">
    <location>
        <begin position="1156"/>
        <end position="1169"/>
    </location>
</feature>
<feature type="helix" evidence="4">
    <location>
        <begin position="1179"/>
        <end position="1189"/>
    </location>
</feature>
<feature type="strand" evidence="4">
    <location>
        <begin position="1191"/>
        <end position="1194"/>
    </location>
</feature>
<feature type="strand" evidence="4">
    <location>
        <begin position="1202"/>
        <end position="1204"/>
    </location>
</feature>
<feature type="helix" evidence="4">
    <location>
        <begin position="1208"/>
        <end position="1214"/>
    </location>
</feature>
<feature type="helix" evidence="4">
    <location>
        <begin position="1219"/>
        <end position="1226"/>
    </location>
</feature>
<feature type="strand" evidence="4">
    <location>
        <begin position="1228"/>
        <end position="1231"/>
    </location>
</feature>
<feature type="helix" evidence="4">
    <location>
        <begin position="1235"/>
        <end position="1240"/>
    </location>
</feature>
<feature type="turn" evidence="4">
    <location>
        <begin position="1248"/>
        <end position="1251"/>
    </location>
</feature>
<feature type="strand" evidence="4">
    <location>
        <begin position="1252"/>
        <end position="1256"/>
    </location>
</feature>
<feature type="helix" evidence="4">
    <location>
        <begin position="1259"/>
        <end position="1262"/>
    </location>
</feature>
<feature type="helix" evidence="4">
    <location>
        <begin position="1265"/>
        <end position="1281"/>
    </location>
</feature>
<organismHost>
    <name type="scientific">Homo sapiens</name>
    <name type="common">Human</name>
    <dbReference type="NCBI Taxonomy" id="9606"/>
</organismHost>
<reference key="1">
    <citation type="journal article" date="1998" name="Virology">
        <title>The complete genomic sequence of the modified vaccinia Ankara strain: comparison with other orthopoxviruses.</title>
        <authorList>
            <person name="Antoine G."/>
            <person name="Scheiflinger F."/>
            <person name="Dorner F."/>
            <person name="Falkner F.G."/>
        </authorList>
    </citation>
    <scope>NUCLEOTIDE SEQUENCE [LARGE SCALE GENOMIC DNA]</scope>
</reference>
<reference key="2">
    <citation type="submission" date="2004-04" db="EMBL/GenBank/DDBJ databases">
        <authorList>
            <person name="Esposito J.J."/>
            <person name="Frace M."/>
            <person name="Sammons S.A."/>
            <person name="Olsen-Rasmussen M.S."/>
            <person name="Osborne J."/>
            <person name="Khristova M."/>
            <person name="Wohlhueter R.M."/>
        </authorList>
    </citation>
    <scope>NUCLEOTIDE SEQUENCE [LARGE SCALE GENOMIC DNA]</scope>
    <source>
        <strain>Isolate Acambis 3000</strain>
    </source>
</reference>
<reference key="3">
    <citation type="journal article" date="2003" name="J. Gen. Virol.">
        <title>Vaccinia virus transcription.</title>
        <authorList>
            <person name="Broyles S.S."/>
        </authorList>
    </citation>
    <scope>REVIEW</scope>
</reference>
<reference evidence="3" key="4">
    <citation type="journal article" date="2019" name="Cell">
        <title>Structural Basis of Poxvirus Transcription: Transcribing and Capping Vaccinia Complexes.</title>
        <authorList>
            <person name="Hillen H.S."/>
            <person name="Bartuli J."/>
            <person name="Grimm C."/>
            <person name="Dienemann C."/>
            <person name="Bedenk K."/>
            <person name="Szalay A.A."/>
            <person name="Fischer U."/>
            <person name="Cramer P."/>
        </authorList>
    </citation>
    <scope>STRUCTURE BY ELECTRON MICROSCOPY (3.10 ANGSTROMS) IN COMPLEX WITH OPG66; OPG90; OPG103; OPG119; OPG131; OPG151 AND OPG156</scope>
    <scope>FUNCTION</scope>
</reference>
<protein>
    <recommendedName>
        <fullName>DNA-directed RNA polymerase 147 kDa polypeptide</fullName>
        <ecNumber>2.7.7.6</ecNumber>
    </recommendedName>
</protein>
<dbReference type="EC" id="2.7.7.6"/>
<dbReference type="EMBL" id="U94848">
    <property type="protein sequence ID" value="AAB96506.1"/>
    <property type="molecule type" value="Genomic_DNA"/>
</dbReference>
<dbReference type="EMBL" id="AY603355">
    <property type="protein sequence ID" value="AAT10488.1"/>
    <property type="molecule type" value="Genomic_DNA"/>
</dbReference>
<dbReference type="PIR" id="T37366">
    <property type="entry name" value="T37366"/>
</dbReference>
<dbReference type="PDB" id="6RIE">
    <property type="method" value="EM"/>
    <property type="resolution" value="3.10 A"/>
    <property type="chains" value="A=1-1286"/>
</dbReference>
<dbReference type="PDBsum" id="6RIE"/>
<dbReference type="SMR" id="O57204"/>
<dbReference type="Proteomes" id="UP000159908">
    <property type="component" value="Segment"/>
</dbReference>
<dbReference type="Proteomes" id="UP000172909">
    <property type="component" value="Segment"/>
</dbReference>
<dbReference type="GO" id="GO:0000428">
    <property type="term" value="C:DNA-directed RNA polymerase complex"/>
    <property type="evidence" value="ECO:0007669"/>
    <property type="project" value="UniProtKB-KW"/>
</dbReference>
<dbReference type="GO" id="GO:0044423">
    <property type="term" value="C:virion component"/>
    <property type="evidence" value="ECO:0007669"/>
    <property type="project" value="UniProtKB-KW"/>
</dbReference>
<dbReference type="GO" id="GO:0003677">
    <property type="term" value="F:DNA binding"/>
    <property type="evidence" value="ECO:0007669"/>
    <property type="project" value="InterPro"/>
</dbReference>
<dbReference type="GO" id="GO:0003899">
    <property type="term" value="F:DNA-directed RNA polymerase activity"/>
    <property type="evidence" value="ECO:0007669"/>
    <property type="project" value="UniProtKB-EC"/>
</dbReference>
<dbReference type="GO" id="GO:0006351">
    <property type="term" value="P:DNA-templated transcription"/>
    <property type="evidence" value="ECO:0007669"/>
    <property type="project" value="InterPro"/>
</dbReference>
<dbReference type="Gene3D" id="1.10.132.30">
    <property type="match status" value="1"/>
</dbReference>
<dbReference type="Gene3D" id="2.40.40.20">
    <property type="match status" value="1"/>
</dbReference>
<dbReference type="Gene3D" id="6.10.250.2940">
    <property type="match status" value="1"/>
</dbReference>
<dbReference type="Gene3D" id="3.30.1490.180">
    <property type="entry name" value="RNA polymerase ii"/>
    <property type="match status" value="1"/>
</dbReference>
<dbReference type="Gene3D" id="4.10.860.120">
    <property type="entry name" value="RNA polymerase II, clamp domain"/>
    <property type="match status" value="1"/>
</dbReference>
<dbReference type="InterPro" id="IPR045867">
    <property type="entry name" value="DNA-dir_RpoC_beta_prime"/>
</dbReference>
<dbReference type="InterPro" id="IPR000722">
    <property type="entry name" value="RNA_pol_asu"/>
</dbReference>
<dbReference type="InterPro" id="IPR006592">
    <property type="entry name" value="RNA_pol_N"/>
</dbReference>
<dbReference type="InterPro" id="IPR007080">
    <property type="entry name" value="RNA_pol_Rpb1_1"/>
</dbReference>
<dbReference type="InterPro" id="IPR007066">
    <property type="entry name" value="RNA_pol_Rpb1_3"/>
</dbReference>
<dbReference type="InterPro" id="IPR007083">
    <property type="entry name" value="RNA_pol_Rpb1_4"/>
</dbReference>
<dbReference type="InterPro" id="IPR007081">
    <property type="entry name" value="RNA_pol_Rpb1_5"/>
</dbReference>
<dbReference type="InterPro" id="IPR044893">
    <property type="entry name" value="RNA_pol_Rpb1_clamp_domain"/>
</dbReference>
<dbReference type="InterPro" id="IPR038120">
    <property type="entry name" value="Rpb1_funnel_sf"/>
</dbReference>
<dbReference type="PANTHER" id="PTHR19376">
    <property type="entry name" value="DNA-DIRECTED RNA POLYMERASE"/>
    <property type="match status" value="1"/>
</dbReference>
<dbReference type="PANTHER" id="PTHR19376:SF32">
    <property type="entry name" value="DNA-DIRECTED RNA POLYMERASE III SUBUNIT RPC1"/>
    <property type="match status" value="1"/>
</dbReference>
<dbReference type="Pfam" id="PF04997">
    <property type="entry name" value="RNA_pol_Rpb1_1"/>
    <property type="match status" value="1"/>
</dbReference>
<dbReference type="Pfam" id="PF00623">
    <property type="entry name" value="RNA_pol_Rpb1_2"/>
    <property type="match status" value="1"/>
</dbReference>
<dbReference type="Pfam" id="PF04983">
    <property type="entry name" value="RNA_pol_Rpb1_3"/>
    <property type="match status" value="1"/>
</dbReference>
<dbReference type="Pfam" id="PF05000">
    <property type="entry name" value="RNA_pol_Rpb1_4"/>
    <property type="match status" value="1"/>
</dbReference>
<dbReference type="Pfam" id="PF04998">
    <property type="entry name" value="RNA_pol_Rpb1_5"/>
    <property type="match status" value="1"/>
</dbReference>
<dbReference type="SMART" id="SM00663">
    <property type="entry name" value="RPOLA_N"/>
    <property type="match status" value="1"/>
</dbReference>
<dbReference type="SUPFAM" id="SSF64484">
    <property type="entry name" value="beta and beta-prime subunits of DNA dependent RNA-polymerase"/>
    <property type="match status" value="1"/>
</dbReference>
<comment type="function">
    <text evidence="1">Part of the DNA-dependent RNA polymerase which catalyzes the transcription of viral DNA into RNA using the four ribonucleoside triphosphates as substrates (PubMed:31835031). Responsible for the transcription of early, intermediate and late genes. DNA-dependent RNA polymerase associates with the early transcription factor (ETF), itself composed of OPG118 and OPG133, thereby allowing the early genes transcription. Late transcription, and probably also intermediate transcription, require newly synthesized RNA polymerase.</text>
</comment>
<comment type="catalytic activity">
    <reaction>
        <text>RNA(n) + a ribonucleoside 5'-triphosphate = RNA(n+1) + diphosphate</text>
        <dbReference type="Rhea" id="RHEA:21248"/>
        <dbReference type="Rhea" id="RHEA-COMP:14527"/>
        <dbReference type="Rhea" id="RHEA-COMP:17342"/>
        <dbReference type="ChEBI" id="CHEBI:33019"/>
        <dbReference type="ChEBI" id="CHEBI:61557"/>
        <dbReference type="ChEBI" id="CHEBI:140395"/>
        <dbReference type="EC" id="2.7.7.6"/>
    </reaction>
</comment>
<comment type="subunit">
    <text evidence="1">The DNA-dependent RNA polymerase used for intermediate and late genes expression consists of eight subunits Rpo30/OPG66, Rpo7/OPG90, Rpo22/OPG103, Rpo147/OPG105, Rpo18/OPG119, Rpo19/OPG131, Rpo132/OPG151 and Rpo35/OPG156 (PubMed:31835031). The same holoenzyme, with the addition of the transcription-specificity factor OPG109, is used for early gene expression.</text>
</comment>
<comment type="subcellular location">
    <subcellularLocation>
        <location evidence="2">Virion</location>
    </subcellularLocation>
    <text>All the enzymes and other proteins required to synthesize early mRNAs are packaged within the virion core along with the DNA genome. This is necessary because viral early mRNAs are synthesized within minutes after virus entry into the cell and are extruded through pores in the core particle.</text>
</comment>
<comment type="similarity">
    <text evidence="2">Belongs to the poxviridae DNA-directed RNA polymerase 147 kDa subunit family.</text>
</comment>
<name>RP147_VACCA</name>
<proteinExistence type="evidence at protein level"/>